<sequence length="126" mass="13534">MAILGLGTDIVEIARIAAVVERSGDQLARRVLAPAEWQQYLTHAQRVRYLAKRFAVKEAAAKALGTGIRQGLAFAQFEVANDTLGKPRLILHGRAAELAADLGIASLHVSLADERRYACATVIAEG</sequence>
<name>ACPS_EDWI9</name>
<evidence type="ECO:0000255" key="1">
    <source>
        <dbReference type="HAMAP-Rule" id="MF_00101"/>
    </source>
</evidence>
<keyword id="KW-0963">Cytoplasm</keyword>
<keyword id="KW-0275">Fatty acid biosynthesis</keyword>
<keyword id="KW-0276">Fatty acid metabolism</keyword>
<keyword id="KW-0444">Lipid biosynthesis</keyword>
<keyword id="KW-0443">Lipid metabolism</keyword>
<keyword id="KW-0460">Magnesium</keyword>
<keyword id="KW-0479">Metal-binding</keyword>
<keyword id="KW-0808">Transferase</keyword>
<dbReference type="EC" id="2.7.8.7" evidence="1"/>
<dbReference type="EMBL" id="CP001600">
    <property type="protein sequence ID" value="ACR70181.1"/>
    <property type="molecule type" value="Genomic_DNA"/>
</dbReference>
<dbReference type="RefSeq" id="WP_015872271.1">
    <property type="nucleotide sequence ID" value="NZ_CP169062.1"/>
</dbReference>
<dbReference type="SMR" id="C5B8X8"/>
<dbReference type="STRING" id="67780.B6E78_07010"/>
<dbReference type="GeneID" id="69539903"/>
<dbReference type="KEGG" id="eic:NT01EI_3028"/>
<dbReference type="PATRIC" id="fig|634503.3.peg.2708"/>
<dbReference type="HOGENOM" id="CLU_089696_3_1_6"/>
<dbReference type="OrthoDB" id="517356at2"/>
<dbReference type="Proteomes" id="UP000001485">
    <property type="component" value="Chromosome"/>
</dbReference>
<dbReference type="GO" id="GO:0005737">
    <property type="term" value="C:cytoplasm"/>
    <property type="evidence" value="ECO:0007669"/>
    <property type="project" value="UniProtKB-SubCell"/>
</dbReference>
<dbReference type="GO" id="GO:0008897">
    <property type="term" value="F:holo-[acyl-carrier-protein] synthase activity"/>
    <property type="evidence" value="ECO:0007669"/>
    <property type="project" value="UniProtKB-UniRule"/>
</dbReference>
<dbReference type="GO" id="GO:0000287">
    <property type="term" value="F:magnesium ion binding"/>
    <property type="evidence" value="ECO:0007669"/>
    <property type="project" value="UniProtKB-UniRule"/>
</dbReference>
<dbReference type="GO" id="GO:0006633">
    <property type="term" value="P:fatty acid biosynthetic process"/>
    <property type="evidence" value="ECO:0007669"/>
    <property type="project" value="UniProtKB-UniRule"/>
</dbReference>
<dbReference type="FunFam" id="3.90.470.20:FF:000001">
    <property type="entry name" value="Holo-[acyl-carrier-protein] synthase"/>
    <property type="match status" value="1"/>
</dbReference>
<dbReference type="Gene3D" id="3.90.470.20">
    <property type="entry name" value="4'-phosphopantetheinyl transferase domain"/>
    <property type="match status" value="1"/>
</dbReference>
<dbReference type="HAMAP" id="MF_00101">
    <property type="entry name" value="AcpS"/>
    <property type="match status" value="1"/>
</dbReference>
<dbReference type="InterPro" id="IPR008278">
    <property type="entry name" value="4-PPantetheinyl_Trfase_dom"/>
</dbReference>
<dbReference type="InterPro" id="IPR037143">
    <property type="entry name" value="4-PPantetheinyl_Trfase_dom_sf"/>
</dbReference>
<dbReference type="InterPro" id="IPR002582">
    <property type="entry name" value="ACPS"/>
</dbReference>
<dbReference type="InterPro" id="IPR004568">
    <property type="entry name" value="Ppantetheine-prot_Trfase_dom"/>
</dbReference>
<dbReference type="NCBIfam" id="TIGR00516">
    <property type="entry name" value="acpS"/>
    <property type="match status" value="1"/>
</dbReference>
<dbReference type="NCBIfam" id="TIGR00556">
    <property type="entry name" value="pantethn_trn"/>
    <property type="match status" value="1"/>
</dbReference>
<dbReference type="Pfam" id="PF01648">
    <property type="entry name" value="ACPS"/>
    <property type="match status" value="1"/>
</dbReference>
<dbReference type="SUPFAM" id="SSF56214">
    <property type="entry name" value="4'-phosphopantetheinyl transferase"/>
    <property type="match status" value="1"/>
</dbReference>
<reference key="1">
    <citation type="submission" date="2009-03" db="EMBL/GenBank/DDBJ databases">
        <title>Complete genome sequence of Edwardsiella ictaluri 93-146.</title>
        <authorList>
            <person name="Williams M.L."/>
            <person name="Gillaspy A.F."/>
            <person name="Dyer D.W."/>
            <person name="Thune R.L."/>
            <person name="Waldbieser G.C."/>
            <person name="Schuster S.C."/>
            <person name="Gipson J."/>
            <person name="Zaitshik J."/>
            <person name="Landry C."/>
            <person name="Lawrence M.L."/>
        </authorList>
    </citation>
    <scope>NUCLEOTIDE SEQUENCE [LARGE SCALE GENOMIC DNA]</scope>
    <source>
        <strain>93-146</strain>
    </source>
</reference>
<feature type="chain" id="PRO_1000202794" description="Holo-[acyl-carrier-protein] synthase">
    <location>
        <begin position="1"/>
        <end position="126"/>
    </location>
</feature>
<feature type="binding site" evidence="1">
    <location>
        <position position="9"/>
    </location>
    <ligand>
        <name>Mg(2+)</name>
        <dbReference type="ChEBI" id="CHEBI:18420"/>
    </ligand>
</feature>
<feature type="binding site" evidence="1">
    <location>
        <position position="58"/>
    </location>
    <ligand>
        <name>Mg(2+)</name>
        <dbReference type="ChEBI" id="CHEBI:18420"/>
    </ligand>
</feature>
<gene>
    <name evidence="1" type="primary">acpS</name>
    <name type="ordered locus">NT01EI_3028</name>
</gene>
<organism>
    <name type="scientific">Edwardsiella ictaluri (strain 93-146)</name>
    <dbReference type="NCBI Taxonomy" id="634503"/>
    <lineage>
        <taxon>Bacteria</taxon>
        <taxon>Pseudomonadati</taxon>
        <taxon>Pseudomonadota</taxon>
        <taxon>Gammaproteobacteria</taxon>
        <taxon>Enterobacterales</taxon>
        <taxon>Hafniaceae</taxon>
        <taxon>Edwardsiella</taxon>
    </lineage>
</organism>
<proteinExistence type="inferred from homology"/>
<protein>
    <recommendedName>
        <fullName evidence="1">Holo-[acyl-carrier-protein] synthase</fullName>
        <shortName evidence="1">Holo-ACP synthase</shortName>
        <ecNumber evidence="1">2.7.8.7</ecNumber>
    </recommendedName>
    <alternativeName>
        <fullName evidence="1">4'-phosphopantetheinyl transferase AcpS</fullName>
    </alternativeName>
</protein>
<comment type="function">
    <text evidence="1">Transfers the 4'-phosphopantetheine moiety from coenzyme A to a Ser of acyl-carrier-protein.</text>
</comment>
<comment type="catalytic activity">
    <reaction evidence="1">
        <text>apo-[ACP] + CoA = holo-[ACP] + adenosine 3',5'-bisphosphate + H(+)</text>
        <dbReference type="Rhea" id="RHEA:12068"/>
        <dbReference type="Rhea" id="RHEA-COMP:9685"/>
        <dbReference type="Rhea" id="RHEA-COMP:9690"/>
        <dbReference type="ChEBI" id="CHEBI:15378"/>
        <dbReference type="ChEBI" id="CHEBI:29999"/>
        <dbReference type="ChEBI" id="CHEBI:57287"/>
        <dbReference type="ChEBI" id="CHEBI:58343"/>
        <dbReference type="ChEBI" id="CHEBI:64479"/>
        <dbReference type="EC" id="2.7.8.7"/>
    </reaction>
</comment>
<comment type="cofactor">
    <cofactor evidence="1">
        <name>Mg(2+)</name>
        <dbReference type="ChEBI" id="CHEBI:18420"/>
    </cofactor>
</comment>
<comment type="subcellular location">
    <subcellularLocation>
        <location evidence="1">Cytoplasm</location>
    </subcellularLocation>
</comment>
<comment type="similarity">
    <text evidence="1">Belongs to the P-Pant transferase superfamily. AcpS family.</text>
</comment>
<accession>C5B8X8</accession>